<comment type="similarity">
    <text evidence="1">Belongs to the bacterial ribosomal protein bS21 family.</text>
</comment>
<dbReference type="EMBL" id="AE016879">
    <property type="protein sequence ID" value="AAP28243.1"/>
    <property type="molecule type" value="Genomic_DNA"/>
</dbReference>
<dbReference type="EMBL" id="AE017334">
    <property type="protein sequence ID" value="AAT33655.1"/>
    <property type="molecule type" value="Genomic_DNA"/>
</dbReference>
<dbReference type="EMBL" id="AE017225">
    <property type="protein sequence ID" value="AAT56507.1"/>
    <property type="molecule type" value="Genomic_DNA"/>
</dbReference>
<dbReference type="RefSeq" id="NP_846757.1">
    <property type="nucleotide sequence ID" value="NC_003997.3"/>
</dbReference>
<dbReference type="RefSeq" id="WP_000048061.1">
    <property type="nucleotide sequence ID" value="NZ_WXXJ01000027.1"/>
</dbReference>
<dbReference type="RefSeq" id="YP_030456.1">
    <property type="nucleotide sequence ID" value="NC_005945.1"/>
</dbReference>
<dbReference type="SMR" id="Q81LS7"/>
<dbReference type="STRING" id="261594.GBAA_4534"/>
<dbReference type="DNASU" id="1088263"/>
<dbReference type="GeneID" id="93006791"/>
<dbReference type="KEGG" id="ban:BA_4534"/>
<dbReference type="KEGG" id="bar:GBAA_4534"/>
<dbReference type="KEGG" id="bat:BAS4208"/>
<dbReference type="PATRIC" id="fig|198094.11.peg.4502"/>
<dbReference type="eggNOG" id="COG0828">
    <property type="taxonomic scope" value="Bacteria"/>
</dbReference>
<dbReference type="HOGENOM" id="CLU_159258_3_2_9"/>
<dbReference type="OMA" id="HQHFEKP"/>
<dbReference type="OrthoDB" id="9799244at2"/>
<dbReference type="Proteomes" id="UP000000427">
    <property type="component" value="Chromosome"/>
</dbReference>
<dbReference type="Proteomes" id="UP000000594">
    <property type="component" value="Chromosome"/>
</dbReference>
<dbReference type="GO" id="GO:1990904">
    <property type="term" value="C:ribonucleoprotein complex"/>
    <property type="evidence" value="ECO:0007669"/>
    <property type="project" value="UniProtKB-KW"/>
</dbReference>
<dbReference type="GO" id="GO:0005840">
    <property type="term" value="C:ribosome"/>
    <property type="evidence" value="ECO:0007669"/>
    <property type="project" value="UniProtKB-KW"/>
</dbReference>
<dbReference type="GO" id="GO:0003735">
    <property type="term" value="F:structural constituent of ribosome"/>
    <property type="evidence" value="ECO:0007669"/>
    <property type="project" value="InterPro"/>
</dbReference>
<dbReference type="GO" id="GO:0006412">
    <property type="term" value="P:translation"/>
    <property type="evidence" value="ECO:0007669"/>
    <property type="project" value="UniProtKB-UniRule"/>
</dbReference>
<dbReference type="Gene3D" id="1.20.5.1150">
    <property type="entry name" value="Ribosomal protein S8"/>
    <property type="match status" value="1"/>
</dbReference>
<dbReference type="HAMAP" id="MF_00358">
    <property type="entry name" value="Ribosomal_bS21"/>
    <property type="match status" value="1"/>
</dbReference>
<dbReference type="InterPro" id="IPR001911">
    <property type="entry name" value="Ribosomal_bS21"/>
</dbReference>
<dbReference type="InterPro" id="IPR018278">
    <property type="entry name" value="Ribosomal_bS21_CS"/>
</dbReference>
<dbReference type="InterPro" id="IPR038380">
    <property type="entry name" value="Ribosomal_bS21_sf"/>
</dbReference>
<dbReference type="NCBIfam" id="TIGR00030">
    <property type="entry name" value="S21p"/>
    <property type="match status" value="1"/>
</dbReference>
<dbReference type="PANTHER" id="PTHR21109">
    <property type="entry name" value="MITOCHONDRIAL 28S RIBOSOMAL PROTEIN S21"/>
    <property type="match status" value="1"/>
</dbReference>
<dbReference type="PANTHER" id="PTHR21109:SF22">
    <property type="entry name" value="SMALL RIBOSOMAL SUBUNIT PROTEIN BS21"/>
    <property type="match status" value="1"/>
</dbReference>
<dbReference type="Pfam" id="PF01165">
    <property type="entry name" value="Ribosomal_S21"/>
    <property type="match status" value="1"/>
</dbReference>
<dbReference type="PRINTS" id="PR00976">
    <property type="entry name" value="RIBOSOMALS21"/>
</dbReference>
<dbReference type="PROSITE" id="PS01181">
    <property type="entry name" value="RIBOSOMAL_S21"/>
    <property type="match status" value="1"/>
</dbReference>
<protein>
    <recommendedName>
        <fullName evidence="1">Small ribosomal subunit protein bS21</fullName>
    </recommendedName>
    <alternativeName>
        <fullName evidence="2">30S ribosomal protein S21</fullName>
    </alternativeName>
</protein>
<reference key="1">
    <citation type="journal article" date="2003" name="Nature">
        <title>The genome sequence of Bacillus anthracis Ames and comparison to closely related bacteria.</title>
        <authorList>
            <person name="Read T.D."/>
            <person name="Peterson S.N."/>
            <person name="Tourasse N.J."/>
            <person name="Baillie L.W."/>
            <person name="Paulsen I.T."/>
            <person name="Nelson K.E."/>
            <person name="Tettelin H."/>
            <person name="Fouts D.E."/>
            <person name="Eisen J.A."/>
            <person name="Gill S.R."/>
            <person name="Holtzapple E.K."/>
            <person name="Okstad O.A."/>
            <person name="Helgason E."/>
            <person name="Rilstone J."/>
            <person name="Wu M."/>
            <person name="Kolonay J.F."/>
            <person name="Beanan M.J."/>
            <person name="Dodson R.J."/>
            <person name="Brinkac L.M."/>
            <person name="Gwinn M.L."/>
            <person name="DeBoy R.T."/>
            <person name="Madpu R."/>
            <person name="Daugherty S.C."/>
            <person name="Durkin A.S."/>
            <person name="Haft D.H."/>
            <person name="Nelson W.C."/>
            <person name="Peterson J.D."/>
            <person name="Pop M."/>
            <person name="Khouri H.M."/>
            <person name="Radune D."/>
            <person name="Benton J.L."/>
            <person name="Mahamoud Y."/>
            <person name="Jiang L."/>
            <person name="Hance I.R."/>
            <person name="Weidman J.F."/>
            <person name="Berry K.J."/>
            <person name="Plaut R.D."/>
            <person name="Wolf A.M."/>
            <person name="Watkins K.L."/>
            <person name="Nierman W.C."/>
            <person name="Hazen A."/>
            <person name="Cline R.T."/>
            <person name="Redmond C."/>
            <person name="Thwaite J.E."/>
            <person name="White O."/>
            <person name="Salzberg S.L."/>
            <person name="Thomason B."/>
            <person name="Friedlander A.M."/>
            <person name="Koehler T.M."/>
            <person name="Hanna P.C."/>
            <person name="Kolstoe A.-B."/>
            <person name="Fraser C.M."/>
        </authorList>
    </citation>
    <scope>NUCLEOTIDE SEQUENCE [LARGE SCALE GENOMIC DNA]</scope>
    <source>
        <strain>Ames / isolate Porton</strain>
    </source>
</reference>
<reference key="2">
    <citation type="journal article" date="2009" name="J. Bacteriol.">
        <title>The complete genome sequence of Bacillus anthracis Ames 'Ancestor'.</title>
        <authorList>
            <person name="Ravel J."/>
            <person name="Jiang L."/>
            <person name="Stanley S.T."/>
            <person name="Wilson M.R."/>
            <person name="Decker R.S."/>
            <person name="Read T.D."/>
            <person name="Worsham P."/>
            <person name="Keim P.S."/>
            <person name="Salzberg S.L."/>
            <person name="Fraser-Liggett C.M."/>
            <person name="Rasko D.A."/>
        </authorList>
    </citation>
    <scope>NUCLEOTIDE SEQUENCE [LARGE SCALE GENOMIC DNA]</scope>
    <source>
        <strain>Ames ancestor</strain>
    </source>
</reference>
<reference key="3">
    <citation type="submission" date="2004-01" db="EMBL/GenBank/DDBJ databases">
        <title>Complete genome sequence of Bacillus anthracis Sterne.</title>
        <authorList>
            <person name="Brettin T.S."/>
            <person name="Bruce D."/>
            <person name="Challacombe J.F."/>
            <person name="Gilna P."/>
            <person name="Han C."/>
            <person name="Hill K."/>
            <person name="Hitchcock P."/>
            <person name="Jackson P."/>
            <person name="Keim P."/>
            <person name="Longmire J."/>
            <person name="Lucas S."/>
            <person name="Okinaka R."/>
            <person name="Richardson P."/>
            <person name="Rubin E."/>
            <person name="Tice H."/>
        </authorList>
    </citation>
    <scope>NUCLEOTIDE SEQUENCE [LARGE SCALE GENOMIC DNA]</scope>
    <source>
        <strain>Sterne</strain>
    </source>
</reference>
<sequence length="57" mass="6773">MSKTVVRKNESLEDALRRFKRSVSKTGTLAEARKREFYEKPSVKRKKKSEAARKRKF</sequence>
<name>RS21_BACAN</name>
<keyword id="KW-1185">Reference proteome</keyword>
<keyword id="KW-0687">Ribonucleoprotein</keyword>
<keyword id="KW-0689">Ribosomal protein</keyword>
<proteinExistence type="inferred from homology"/>
<evidence type="ECO:0000255" key="1">
    <source>
        <dbReference type="HAMAP-Rule" id="MF_00358"/>
    </source>
</evidence>
<evidence type="ECO:0000305" key="2"/>
<feature type="chain" id="PRO_0000178293" description="Small ribosomal subunit protein bS21">
    <location>
        <begin position="1"/>
        <end position="57"/>
    </location>
</feature>
<organism>
    <name type="scientific">Bacillus anthracis</name>
    <dbReference type="NCBI Taxonomy" id="1392"/>
    <lineage>
        <taxon>Bacteria</taxon>
        <taxon>Bacillati</taxon>
        <taxon>Bacillota</taxon>
        <taxon>Bacilli</taxon>
        <taxon>Bacillales</taxon>
        <taxon>Bacillaceae</taxon>
        <taxon>Bacillus</taxon>
        <taxon>Bacillus cereus group</taxon>
    </lineage>
</organism>
<accession>Q81LS7</accession>
<accession>Q6HT82</accession>
<accession>Q6KMH2</accession>
<gene>
    <name evidence="1" type="primary">rpsU</name>
    <name type="ordered locus">BA_4534</name>
    <name type="ordered locus">GBAA_4534</name>
    <name type="ordered locus">BAS4208</name>
</gene>